<gene>
    <name evidence="1" type="primary">cysG</name>
    <name type="ordered locus">Z4729</name>
    <name type="ordered locus">ECs4219</name>
</gene>
<feature type="chain" id="PRO_0000150379" description="Siroheme synthase">
    <location>
        <begin position="1"/>
        <end position="457"/>
    </location>
</feature>
<feature type="region of interest" description="Precorrin-2 dehydrogenase /sirohydrochlorin ferrochelatase" evidence="1">
    <location>
        <begin position="1"/>
        <end position="204"/>
    </location>
</feature>
<feature type="region of interest" description="Uroporphyrinogen-III C-methyltransferase" evidence="1">
    <location>
        <begin position="216"/>
        <end position="457"/>
    </location>
</feature>
<feature type="active site" description="Proton acceptor" evidence="1">
    <location>
        <position position="248"/>
    </location>
</feature>
<feature type="active site" description="Proton donor" evidence="1">
    <location>
        <position position="270"/>
    </location>
</feature>
<feature type="binding site" evidence="1">
    <location>
        <begin position="22"/>
        <end position="23"/>
    </location>
    <ligand>
        <name>NAD(+)</name>
        <dbReference type="ChEBI" id="CHEBI:57540"/>
    </ligand>
</feature>
<feature type="binding site" evidence="1">
    <location>
        <begin position="43"/>
        <end position="44"/>
    </location>
    <ligand>
        <name>NAD(+)</name>
        <dbReference type="ChEBI" id="CHEBI:57540"/>
    </ligand>
</feature>
<feature type="binding site" evidence="1">
    <location>
        <position position="225"/>
    </location>
    <ligand>
        <name>S-adenosyl-L-methionine</name>
        <dbReference type="ChEBI" id="CHEBI:59789"/>
    </ligand>
</feature>
<feature type="binding site" evidence="1">
    <location>
        <begin position="301"/>
        <end position="303"/>
    </location>
    <ligand>
        <name>S-adenosyl-L-methionine</name>
        <dbReference type="ChEBI" id="CHEBI:59789"/>
    </ligand>
</feature>
<feature type="binding site" evidence="1">
    <location>
        <position position="306"/>
    </location>
    <ligand>
        <name>S-adenosyl-L-methionine</name>
        <dbReference type="ChEBI" id="CHEBI:59789"/>
    </ligand>
</feature>
<feature type="binding site" evidence="1">
    <location>
        <begin position="331"/>
        <end position="332"/>
    </location>
    <ligand>
        <name>S-adenosyl-L-methionine</name>
        <dbReference type="ChEBI" id="CHEBI:59789"/>
    </ligand>
</feature>
<feature type="binding site" evidence="1">
    <location>
        <position position="382"/>
    </location>
    <ligand>
        <name>S-adenosyl-L-methionine</name>
        <dbReference type="ChEBI" id="CHEBI:59789"/>
    </ligand>
</feature>
<feature type="binding site" evidence="1">
    <location>
        <position position="411"/>
    </location>
    <ligand>
        <name>S-adenosyl-L-methionine</name>
        <dbReference type="ChEBI" id="CHEBI:59789"/>
    </ligand>
</feature>
<feature type="modified residue" description="Phosphoserine" evidence="1">
    <location>
        <position position="128"/>
    </location>
</feature>
<sequence>MDHLPIFCQLRDRDCLIVGGGDVAERKARLLLDAGARLTVNALAFIPQFTAWADAGMLTLVEGPFDESLLDTCWLAIAATDDDALNQRVSEAAEARRIFCNVVDAPKAASFIMPSIIDRSPLMVAVSSGGTSPVLARLLREKLESLLPLHLGQVAKYAGQLRGRVKQQFATMGERRRFWEKLFVNDRLAQSLANNDQKAITETTEQLINEPLDHRGEVVLVGAGPGDAGLLTLKGLQQIQQADVVVYDRLVSDDIMNLVRRDADRVFVGKRAGYHCVPQEEINQILLREAQKGKRVVRLKGGDPFIFGRGGEELETLCNAGIPFSVVPGITAASGCSAYSGIPLTHRDYAQSVRLITGHLKTGGELDWENLAAEKQTLVFYMGLNQAATIQQKLIEHGMPGEMPVAIVENGTAVTQRVIDGTLTQLGELAQQMNSPSLIIIGRVVGLRDKLNWFSNH</sequence>
<organism>
    <name type="scientific">Escherichia coli O157:H7</name>
    <dbReference type="NCBI Taxonomy" id="83334"/>
    <lineage>
        <taxon>Bacteria</taxon>
        <taxon>Pseudomonadati</taxon>
        <taxon>Pseudomonadota</taxon>
        <taxon>Gammaproteobacteria</taxon>
        <taxon>Enterobacterales</taxon>
        <taxon>Enterobacteriaceae</taxon>
        <taxon>Escherichia</taxon>
    </lineage>
</organism>
<protein>
    <recommendedName>
        <fullName evidence="1">Siroheme synthase</fullName>
    </recommendedName>
    <domain>
        <recommendedName>
            <fullName evidence="1">Uroporphyrinogen-III C-methyltransferase</fullName>
            <shortName evidence="1">Urogen III methylase</shortName>
            <ecNumber evidence="1">2.1.1.107</ecNumber>
        </recommendedName>
        <alternativeName>
            <fullName evidence="1">SUMT</fullName>
        </alternativeName>
        <alternativeName>
            <fullName evidence="1">Uroporphyrinogen III methylase</fullName>
            <shortName evidence="1">UROM</shortName>
        </alternativeName>
    </domain>
    <domain>
        <recommendedName>
            <fullName evidence="1">Precorrin-2 dehydrogenase</fullName>
            <ecNumber evidence="1">1.3.1.76</ecNumber>
        </recommendedName>
    </domain>
    <domain>
        <recommendedName>
            <fullName evidence="1">Sirohydrochlorin ferrochelatase</fullName>
            <ecNumber evidence="1">4.99.1.4</ecNumber>
        </recommendedName>
    </domain>
</protein>
<reference key="1">
    <citation type="journal article" date="2001" name="Nature">
        <title>Genome sequence of enterohaemorrhagic Escherichia coli O157:H7.</title>
        <authorList>
            <person name="Perna N.T."/>
            <person name="Plunkett G. III"/>
            <person name="Burland V."/>
            <person name="Mau B."/>
            <person name="Glasner J.D."/>
            <person name="Rose D.J."/>
            <person name="Mayhew G.F."/>
            <person name="Evans P.S."/>
            <person name="Gregor J."/>
            <person name="Kirkpatrick H.A."/>
            <person name="Posfai G."/>
            <person name="Hackett J."/>
            <person name="Klink S."/>
            <person name="Boutin A."/>
            <person name="Shao Y."/>
            <person name="Miller L."/>
            <person name="Grotbeck E.J."/>
            <person name="Davis N.W."/>
            <person name="Lim A."/>
            <person name="Dimalanta E.T."/>
            <person name="Potamousis K."/>
            <person name="Apodaca J."/>
            <person name="Anantharaman T.S."/>
            <person name="Lin J."/>
            <person name="Yen G."/>
            <person name="Schwartz D.C."/>
            <person name="Welch R.A."/>
            <person name="Blattner F.R."/>
        </authorList>
    </citation>
    <scope>NUCLEOTIDE SEQUENCE [LARGE SCALE GENOMIC DNA]</scope>
    <source>
        <strain>O157:H7 / EDL933 / ATCC 700927 / EHEC</strain>
    </source>
</reference>
<reference key="2">
    <citation type="journal article" date="2001" name="DNA Res.">
        <title>Complete genome sequence of enterohemorrhagic Escherichia coli O157:H7 and genomic comparison with a laboratory strain K-12.</title>
        <authorList>
            <person name="Hayashi T."/>
            <person name="Makino K."/>
            <person name="Ohnishi M."/>
            <person name="Kurokawa K."/>
            <person name="Ishii K."/>
            <person name="Yokoyama K."/>
            <person name="Han C.-G."/>
            <person name="Ohtsubo E."/>
            <person name="Nakayama K."/>
            <person name="Murata T."/>
            <person name="Tanaka M."/>
            <person name="Tobe T."/>
            <person name="Iida T."/>
            <person name="Takami H."/>
            <person name="Honda T."/>
            <person name="Sasakawa C."/>
            <person name="Ogasawara N."/>
            <person name="Yasunaga T."/>
            <person name="Kuhara S."/>
            <person name="Shiba T."/>
            <person name="Hattori M."/>
            <person name="Shinagawa H."/>
        </authorList>
    </citation>
    <scope>NUCLEOTIDE SEQUENCE [LARGE SCALE GENOMIC DNA]</scope>
    <source>
        <strain>O157:H7 / Sakai / RIMD 0509952 / EHEC</strain>
    </source>
</reference>
<proteinExistence type="inferred from homology"/>
<dbReference type="EC" id="2.1.1.107" evidence="1"/>
<dbReference type="EC" id="1.3.1.76" evidence="1"/>
<dbReference type="EC" id="4.99.1.4" evidence="1"/>
<dbReference type="EMBL" id="AE005174">
    <property type="protein sequence ID" value="AAG58476.1"/>
    <property type="molecule type" value="Genomic_DNA"/>
</dbReference>
<dbReference type="EMBL" id="BA000007">
    <property type="protein sequence ID" value="BAB37642.1"/>
    <property type="molecule type" value="Genomic_DNA"/>
</dbReference>
<dbReference type="PIR" id="C91156">
    <property type="entry name" value="C91156"/>
</dbReference>
<dbReference type="PIR" id="H86001">
    <property type="entry name" value="H86001"/>
</dbReference>
<dbReference type="RefSeq" id="NP_312246.1">
    <property type="nucleotide sequence ID" value="NC_002695.1"/>
</dbReference>
<dbReference type="RefSeq" id="WP_000349855.1">
    <property type="nucleotide sequence ID" value="NZ_VOAI01000004.1"/>
</dbReference>
<dbReference type="SMR" id="P0AEA9"/>
<dbReference type="STRING" id="155864.Z4729"/>
<dbReference type="GeneID" id="75173526"/>
<dbReference type="GeneID" id="915926"/>
<dbReference type="KEGG" id="ece:Z4729"/>
<dbReference type="KEGG" id="ecs:ECs_4219"/>
<dbReference type="PATRIC" id="fig|386585.9.peg.4404"/>
<dbReference type="eggNOG" id="COG0007">
    <property type="taxonomic scope" value="Bacteria"/>
</dbReference>
<dbReference type="eggNOG" id="COG1648">
    <property type="taxonomic scope" value="Bacteria"/>
</dbReference>
<dbReference type="HOGENOM" id="CLU_011276_2_0_6"/>
<dbReference type="OMA" id="IPYGRFM"/>
<dbReference type="UniPathway" id="UPA00148">
    <property type="reaction ID" value="UER00211"/>
</dbReference>
<dbReference type="UniPathway" id="UPA00148">
    <property type="reaction ID" value="UER00222"/>
</dbReference>
<dbReference type="UniPathway" id="UPA00262">
    <property type="reaction ID" value="UER00211"/>
</dbReference>
<dbReference type="UniPathway" id="UPA00262">
    <property type="reaction ID" value="UER00222"/>
</dbReference>
<dbReference type="UniPathway" id="UPA00262">
    <property type="reaction ID" value="UER00376"/>
</dbReference>
<dbReference type="Proteomes" id="UP000000558">
    <property type="component" value="Chromosome"/>
</dbReference>
<dbReference type="Proteomes" id="UP000002519">
    <property type="component" value="Chromosome"/>
</dbReference>
<dbReference type="GO" id="GO:0051287">
    <property type="term" value="F:NAD binding"/>
    <property type="evidence" value="ECO:0007669"/>
    <property type="project" value="InterPro"/>
</dbReference>
<dbReference type="GO" id="GO:0043115">
    <property type="term" value="F:precorrin-2 dehydrogenase activity"/>
    <property type="evidence" value="ECO:0007669"/>
    <property type="project" value="UniProtKB-UniRule"/>
</dbReference>
<dbReference type="GO" id="GO:0051266">
    <property type="term" value="F:sirohydrochlorin ferrochelatase activity"/>
    <property type="evidence" value="ECO:0007669"/>
    <property type="project" value="UniProtKB-EC"/>
</dbReference>
<dbReference type="GO" id="GO:0004851">
    <property type="term" value="F:uroporphyrin-III C-methyltransferase activity"/>
    <property type="evidence" value="ECO:0007669"/>
    <property type="project" value="UniProtKB-UniRule"/>
</dbReference>
<dbReference type="GO" id="GO:0009236">
    <property type="term" value="P:cobalamin biosynthetic process"/>
    <property type="evidence" value="ECO:0007669"/>
    <property type="project" value="UniProtKB-UniRule"/>
</dbReference>
<dbReference type="GO" id="GO:0032259">
    <property type="term" value="P:methylation"/>
    <property type="evidence" value="ECO:0007669"/>
    <property type="project" value="UniProtKB-KW"/>
</dbReference>
<dbReference type="GO" id="GO:0019354">
    <property type="term" value="P:siroheme biosynthetic process"/>
    <property type="evidence" value="ECO:0007669"/>
    <property type="project" value="UniProtKB-UniRule"/>
</dbReference>
<dbReference type="CDD" id="cd11642">
    <property type="entry name" value="SUMT"/>
    <property type="match status" value="1"/>
</dbReference>
<dbReference type="FunFam" id="1.10.8.210:FF:000001">
    <property type="entry name" value="Siroheme synthase"/>
    <property type="match status" value="1"/>
</dbReference>
<dbReference type="FunFam" id="3.30.160.110:FF:000001">
    <property type="entry name" value="Siroheme synthase"/>
    <property type="match status" value="1"/>
</dbReference>
<dbReference type="FunFam" id="3.30.950.10:FF:000001">
    <property type="entry name" value="Siroheme synthase"/>
    <property type="match status" value="1"/>
</dbReference>
<dbReference type="FunFam" id="3.40.1010.10:FF:000001">
    <property type="entry name" value="Siroheme synthase"/>
    <property type="match status" value="1"/>
</dbReference>
<dbReference type="FunFam" id="3.40.50.720:FF:000092">
    <property type="entry name" value="Siroheme synthase"/>
    <property type="match status" value="1"/>
</dbReference>
<dbReference type="Gene3D" id="3.40.1010.10">
    <property type="entry name" value="Cobalt-precorrin-4 Transmethylase, Domain 1"/>
    <property type="match status" value="1"/>
</dbReference>
<dbReference type="Gene3D" id="3.30.950.10">
    <property type="entry name" value="Methyltransferase, Cobalt-precorrin-4 Transmethylase, Domain 2"/>
    <property type="match status" value="1"/>
</dbReference>
<dbReference type="Gene3D" id="3.40.50.720">
    <property type="entry name" value="NAD(P)-binding Rossmann-like Domain"/>
    <property type="match status" value="1"/>
</dbReference>
<dbReference type="Gene3D" id="1.10.8.210">
    <property type="entry name" value="Sirohaem synthase, dimerisation domain"/>
    <property type="match status" value="1"/>
</dbReference>
<dbReference type="Gene3D" id="3.30.160.110">
    <property type="entry name" value="Siroheme synthase, domain 2"/>
    <property type="match status" value="1"/>
</dbReference>
<dbReference type="HAMAP" id="MF_01646">
    <property type="entry name" value="Siroheme_synth"/>
    <property type="match status" value="1"/>
</dbReference>
<dbReference type="InterPro" id="IPR000878">
    <property type="entry name" value="4pyrrol_Mease"/>
</dbReference>
<dbReference type="InterPro" id="IPR035996">
    <property type="entry name" value="4pyrrol_Methylase_sf"/>
</dbReference>
<dbReference type="InterPro" id="IPR014777">
    <property type="entry name" value="4pyrrole_Mease_sub1"/>
</dbReference>
<dbReference type="InterPro" id="IPR014776">
    <property type="entry name" value="4pyrrole_Mease_sub2"/>
</dbReference>
<dbReference type="InterPro" id="IPR006366">
    <property type="entry name" value="CobA/CysG_C"/>
</dbReference>
<dbReference type="InterPro" id="IPR036291">
    <property type="entry name" value="NAD(P)-bd_dom_sf"/>
</dbReference>
<dbReference type="InterPro" id="IPR050161">
    <property type="entry name" value="Siro_Cobalamin_biosynth"/>
</dbReference>
<dbReference type="InterPro" id="IPR037115">
    <property type="entry name" value="Sirohaem_synt_dimer_dom_sf"/>
</dbReference>
<dbReference type="InterPro" id="IPR012409">
    <property type="entry name" value="Sirohaem_synth"/>
</dbReference>
<dbReference type="InterPro" id="IPR028281">
    <property type="entry name" value="Sirohaem_synthase_central"/>
</dbReference>
<dbReference type="InterPro" id="IPR019478">
    <property type="entry name" value="Sirohaem_synthase_dimer_dom"/>
</dbReference>
<dbReference type="InterPro" id="IPR006367">
    <property type="entry name" value="Sirohaem_synthase_N"/>
</dbReference>
<dbReference type="InterPro" id="IPR003043">
    <property type="entry name" value="Uropor_MeTrfase_CS"/>
</dbReference>
<dbReference type="NCBIfam" id="TIGR01469">
    <property type="entry name" value="cobA_cysG_Cterm"/>
    <property type="match status" value="1"/>
</dbReference>
<dbReference type="NCBIfam" id="TIGR01470">
    <property type="entry name" value="cysG_Nterm"/>
    <property type="match status" value="1"/>
</dbReference>
<dbReference type="NCBIfam" id="NF004790">
    <property type="entry name" value="PRK06136.1"/>
    <property type="match status" value="1"/>
</dbReference>
<dbReference type="NCBIfam" id="NF007922">
    <property type="entry name" value="PRK10637.1"/>
    <property type="match status" value="1"/>
</dbReference>
<dbReference type="PANTHER" id="PTHR45790:SF1">
    <property type="entry name" value="SIROHEME SYNTHASE"/>
    <property type="match status" value="1"/>
</dbReference>
<dbReference type="PANTHER" id="PTHR45790">
    <property type="entry name" value="SIROHEME SYNTHASE-RELATED"/>
    <property type="match status" value="1"/>
</dbReference>
<dbReference type="Pfam" id="PF10414">
    <property type="entry name" value="CysG_dimeriser"/>
    <property type="match status" value="1"/>
</dbReference>
<dbReference type="Pfam" id="PF13241">
    <property type="entry name" value="NAD_binding_7"/>
    <property type="match status" value="1"/>
</dbReference>
<dbReference type="Pfam" id="PF14824">
    <property type="entry name" value="Sirohm_synth_M"/>
    <property type="match status" value="1"/>
</dbReference>
<dbReference type="Pfam" id="PF00590">
    <property type="entry name" value="TP_methylase"/>
    <property type="match status" value="1"/>
</dbReference>
<dbReference type="PIRSF" id="PIRSF036426">
    <property type="entry name" value="Sirohaem_synth"/>
    <property type="match status" value="1"/>
</dbReference>
<dbReference type="SUPFAM" id="SSF51735">
    <property type="entry name" value="NAD(P)-binding Rossmann-fold domains"/>
    <property type="match status" value="1"/>
</dbReference>
<dbReference type="SUPFAM" id="SSF75615">
    <property type="entry name" value="Siroheme synthase middle domains-like"/>
    <property type="match status" value="1"/>
</dbReference>
<dbReference type="SUPFAM" id="SSF53790">
    <property type="entry name" value="Tetrapyrrole methylase"/>
    <property type="match status" value="1"/>
</dbReference>
<dbReference type="PROSITE" id="PS00839">
    <property type="entry name" value="SUMT_1"/>
    <property type="match status" value="1"/>
</dbReference>
<dbReference type="PROSITE" id="PS00840">
    <property type="entry name" value="SUMT_2"/>
    <property type="match status" value="1"/>
</dbReference>
<comment type="function">
    <text evidence="1">Multifunctional enzyme that catalyzes the SAM-dependent methylations of uroporphyrinogen III at position C-2 and C-7 to form precorrin-2 via precorrin-1. Then it catalyzes the NAD-dependent ring dehydrogenation of precorrin-2 to yield sirohydrochlorin. Finally, it catalyzes the ferrochelation of sirohydrochlorin to yield siroheme.</text>
</comment>
<comment type="catalytic activity">
    <reaction evidence="1">
        <text>uroporphyrinogen III + 2 S-adenosyl-L-methionine = precorrin-2 + 2 S-adenosyl-L-homocysteine + H(+)</text>
        <dbReference type="Rhea" id="RHEA:32459"/>
        <dbReference type="ChEBI" id="CHEBI:15378"/>
        <dbReference type="ChEBI" id="CHEBI:57308"/>
        <dbReference type="ChEBI" id="CHEBI:57856"/>
        <dbReference type="ChEBI" id="CHEBI:58827"/>
        <dbReference type="ChEBI" id="CHEBI:59789"/>
        <dbReference type="EC" id="2.1.1.107"/>
    </reaction>
</comment>
<comment type="catalytic activity">
    <reaction evidence="1">
        <text>precorrin-2 + NAD(+) = sirohydrochlorin + NADH + 2 H(+)</text>
        <dbReference type="Rhea" id="RHEA:15613"/>
        <dbReference type="ChEBI" id="CHEBI:15378"/>
        <dbReference type="ChEBI" id="CHEBI:57540"/>
        <dbReference type="ChEBI" id="CHEBI:57945"/>
        <dbReference type="ChEBI" id="CHEBI:58351"/>
        <dbReference type="ChEBI" id="CHEBI:58827"/>
        <dbReference type="EC" id="1.3.1.76"/>
    </reaction>
</comment>
<comment type="catalytic activity">
    <reaction evidence="1">
        <text>siroheme + 2 H(+) = sirohydrochlorin + Fe(2+)</text>
        <dbReference type="Rhea" id="RHEA:24360"/>
        <dbReference type="ChEBI" id="CHEBI:15378"/>
        <dbReference type="ChEBI" id="CHEBI:29033"/>
        <dbReference type="ChEBI" id="CHEBI:58351"/>
        <dbReference type="ChEBI" id="CHEBI:60052"/>
        <dbReference type="EC" id="4.99.1.4"/>
    </reaction>
</comment>
<comment type="pathway">
    <text evidence="1">Cofactor biosynthesis; adenosylcobalamin biosynthesis; precorrin-2 from uroporphyrinogen III: step 1/1.</text>
</comment>
<comment type="pathway">
    <text evidence="1">Cofactor biosynthesis; adenosylcobalamin biosynthesis; sirohydrochlorin from precorrin-2: step 1/1.</text>
</comment>
<comment type="pathway">
    <text evidence="1">Porphyrin-containing compound metabolism; siroheme biosynthesis; precorrin-2 from uroporphyrinogen III: step 1/1.</text>
</comment>
<comment type="pathway">
    <text evidence="1">Porphyrin-containing compound metabolism; siroheme biosynthesis; siroheme from sirohydrochlorin: step 1/1.</text>
</comment>
<comment type="pathway">
    <text evidence="1">Porphyrin-containing compound metabolism; siroheme biosynthesis; sirohydrochlorin from precorrin-2: step 1/1.</text>
</comment>
<comment type="similarity">
    <text evidence="1">In the N-terminal section; belongs to the precorrin-2 dehydrogenase / sirohydrochlorin ferrochelatase family.</text>
</comment>
<comment type="similarity">
    <text evidence="1">In the C-terminal section; belongs to the precorrin methyltransferase family.</text>
</comment>
<evidence type="ECO:0000255" key="1">
    <source>
        <dbReference type="HAMAP-Rule" id="MF_01646"/>
    </source>
</evidence>
<name>CYSG_ECO57</name>
<keyword id="KW-0169">Cobalamin biosynthesis</keyword>
<keyword id="KW-0456">Lyase</keyword>
<keyword id="KW-0489">Methyltransferase</keyword>
<keyword id="KW-0511">Multifunctional enzyme</keyword>
<keyword id="KW-0520">NAD</keyword>
<keyword id="KW-0560">Oxidoreductase</keyword>
<keyword id="KW-0597">Phosphoprotein</keyword>
<keyword id="KW-0627">Porphyrin biosynthesis</keyword>
<keyword id="KW-1185">Reference proteome</keyword>
<keyword id="KW-0949">S-adenosyl-L-methionine</keyword>
<keyword id="KW-0808">Transferase</keyword>
<accession>P0AEA9</accession>
<accession>P11098</accession>
<accession>P76685</accession>